<accession>Q8NG27</accession>
<accession>A2A322</accession>
<accession>Q5JUT8</accession>
<accession>Q5JUT9</accession>
<accession>Q8NG28</accession>
<accession>Q9HAC1</accession>
<protein>
    <recommendedName>
        <fullName>E3 ubiquitin-protein ligase Praja-1</fullName>
        <shortName>Praja1</shortName>
        <ecNumber>2.3.2.27</ecNumber>
    </recommendedName>
    <alternativeName>
        <fullName>RING finger protein 70</fullName>
    </alternativeName>
    <alternativeName>
        <fullName evidence="8">RING-type E3 ubiquitin transferase Praja-1</fullName>
    </alternativeName>
</protein>
<name>PJA1_HUMAN</name>
<reference key="1">
    <citation type="journal article" date="2002" name="Genomics">
        <title>PJA1, encoding a RING-H2 finger ubiquitin ligase, is a novel human X chromosome gene abundantly expressed in brain.</title>
        <authorList>
            <person name="Yu P."/>
            <person name="Chen Y."/>
            <person name="Tagle D.A."/>
            <person name="Cai T."/>
        </authorList>
    </citation>
    <scope>NUCLEOTIDE SEQUENCE [MRNA] (ISOFORMS 1 AND 2)</scope>
    <scope>FUNCTION</scope>
    <scope>TISSUE SPECIFICITY</scope>
    <scope>INTERACTION WITH UBE2D2</scope>
    <source>
        <tissue>Brain</tissue>
    </source>
</reference>
<reference key="2">
    <citation type="journal article" date="2005" name="Nature">
        <title>The DNA sequence of the human X chromosome.</title>
        <authorList>
            <person name="Ross M.T."/>
            <person name="Grafham D.V."/>
            <person name="Coffey A.J."/>
            <person name="Scherer S."/>
            <person name="McLay K."/>
            <person name="Muzny D."/>
            <person name="Platzer M."/>
            <person name="Howell G.R."/>
            <person name="Burrows C."/>
            <person name="Bird C.P."/>
            <person name="Frankish A."/>
            <person name="Lovell F.L."/>
            <person name="Howe K.L."/>
            <person name="Ashurst J.L."/>
            <person name="Fulton R.S."/>
            <person name="Sudbrak R."/>
            <person name="Wen G."/>
            <person name="Jones M.C."/>
            <person name="Hurles M.E."/>
            <person name="Andrews T.D."/>
            <person name="Scott C.E."/>
            <person name="Searle S."/>
            <person name="Ramser J."/>
            <person name="Whittaker A."/>
            <person name="Deadman R."/>
            <person name="Carter N.P."/>
            <person name="Hunt S.E."/>
            <person name="Chen R."/>
            <person name="Cree A."/>
            <person name="Gunaratne P."/>
            <person name="Havlak P."/>
            <person name="Hodgson A."/>
            <person name="Metzker M.L."/>
            <person name="Richards S."/>
            <person name="Scott G."/>
            <person name="Steffen D."/>
            <person name="Sodergren E."/>
            <person name="Wheeler D.A."/>
            <person name="Worley K.C."/>
            <person name="Ainscough R."/>
            <person name="Ambrose K.D."/>
            <person name="Ansari-Lari M.A."/>
            <person name="Aradhya S."/>
            <person name="Ashwell R.I."/>
            <person name="Babbage A.K."/>
            <person name="Bagguley C.L."/>
            <person name="Ballabio A."/>
            <person name="Banerjee R."/>
            <person name="Barker G.E."/>
            <person name="Barlow K.F."/>
            <person name="Barrett I.P."/>
            <person name="Bates K.N."/>
            <person name="Beare D.M."/>
            <person name="Beasley H."/>
            <person name="Beasley O."/>
            <person name="Beck A."/>
            <person name="Bethel G."/>
            <person name="Blechschmidt K."/>
            <person name="Brady N."/>
            <person name="Bray-Allen S."/>
            <person name="Bridgeman A.M."/>
            <person name="Brown A.J."/>
            <person name="Brown M.J."/>
            <person name="Bonnin D."/>
            <person name="Bruford E.A."/>
            <person name="Buhay C."/>
            <person name="Burch P."/>
            <person name="Burford D."/>
            <person name="Burgess J."/>
            <person name="Burrill W."/>
            <person name="Burton J."/>
            <person name="Bye J.M."/>
            <person name="Carder C."/>
            <person name="Carrel L."/>
            <person name="Chako J."/>
            <person name="Chapman J.C."/>
            <person name="Chavez D."/>
            <person name="Chen E."/>
            <person name="Chen G."/>
            <person name="Chen Y."/>
            <person name="Chen Z."/>
            <person name="Chinault C."/>
            <person name="Ciccodicola A."/>
            <person name="Clark S.Y."/>
            <person name="Clarke G."/>
            <person name="Clee C.M."/>
            <person name="Clegg S."/>
            <person name="Clerc-Blankenburg K."/>
            <person name="Clifford K."/>
            <person name="Cobley V."/>
            <person name="Cole C.G."/>
            <person name="Conquer J.S."/>
            <person name="Corby N."/>
            <person name="Connor R.E."/>
            <person name="David R."/>
            <person name="Davies J."/>
            <person name="Davis C."/>
            <person name="Davis J."/>
            <person name="Delgado O."/>
            <person name="Deshazo D."/>
            <person name="Dhami P."/>
            <person name="Ding Y."/>
            <person name="Dinh H."/>
            <person name="Dodsworth S."/>
            <person name="Draper H."/>
            <person name="Dugan-Rocha S."/>
            <person name="Dunham A."/>
            <person name="Dunn M."/>
            <person name="Durbin K.J."/>
            <person name="Dutta I."/>
            <person name="Eades T."/>
            <person name="Ellwood M."/>
            <person name="Emery-Cohen A."/>
            <person name="Errington H."/>
            <person name="Evans K.L."/>
            <person name="Faulkner L."/>
            <person name="Francis F."/>
            <person name="Frankland J."/>
            <person name="Fraser A.E."/>
            <person name="Galgoczy P."/>
            <person name="Gilbert J."/>
            <person name="Gill R."/>
            <person name="Gloeckner G."/>
            <person name="Gregory S.G."/>
            <person name="Gribble S."/>
            <person name="Griffiths C."/>
            <person name="Grocock R."/>
            <person name="Gu Y."/>
            <person name="Gwilliam R."/>
            <person name="Hamilton C."/>
            <person name="Hart E.A."/>
            <person name="Hawes A."/>
            <person name="Heath P.D."/>
            <person name="Heitmann K."/>
            <person name="Hennig S."/>
            <person name="Hernandez J."/>
            <person name="Hinzmann B."/>
            <person name="Ho S."/>
            <person name="Hoffs M."/>
            <person name="Howden P.J."/>
            <person name="Huckle E.J."/>
            <person name="Hume J."/>
            <person name="Hunt P.J."/>
            <person name="Hunt A.R."/>
            <person name="Isherwood J."/>
            <person name="Jacob L."/>
            <person name="Johnson D."/>
            <person name="Jones S."/>
            <person name="de Jong P.J."/>
            <person name="Joseph S.S."/>
            <person name="Keenan S."/>
            <person name="Kelly S."/>
            <person name="Kershaw J.K."/>
            <person name="Khan Z."/>
            <person name="Kioschis P."/>
            <person name="Klages S."/>
            <person name="Knights A.J."/>
            <person name="Kosiura A."/>
            <person name="Kovar-Smith C."/>
            <person name="Laird G.K."/>
            <person name="Langford C."/>
            <person name="Lawlor S."/>
            <person name="Leversha M."/>
            <person name="Lewis L."/>
            <person name="Liu W."/>
            <person name="Lloyd C."/>
            <person name="Lloyd D.M."/>
            <person name="Loulseged H."/>
            <person name="Loveland J.E."/>
            <person name="Lovell J.D."/>
            <person name="Lozado R."/>
            <person name="Lu J."/>
            <person name="Lyne R."/>
            <person name="Ma J."/>
            <person name="Maheshwari M."/>
            <person name="Matthews L.H."/>
            <person name="McDowall J."/>
            <person name="McLaren S."/>
            <person name="McMurray A."/>
            <person name="Meidl P."/>
            <person name="Meitinger T."/>
            <person name="Milne S."/>
            <person name="Miner G."/>
            <person name="Mistry S.L."/>
            <person name="Morgan M."/>
            <person name="Morris S."/>
            <person name="Mueller I."/>
            <person name="Mullikin J.C."/>
            <person name="Nguyen N."/>
            <person name="Nordsiek G."/>
            <person name="Nyakatura G."/>
            <person name="O'dell C.N."/>
            <person name="Okwuonu G."/>
            <person name="Palmer S."/>
            <person name="Pandian R."/>
            <person name="Parker D."/>
            <person name="Parrish J."/>
            <person name="Pasternak S."/>
            <person name="Patel D."/>
            <person name="Pearce A.V."/>
            <person name="Pearson D.M."/>
            <person name="Pelan S.E."/>
            <person name="Perez L."/>
            <person name="Porter K.M."/>
            <person name="Ramsey Y."/>
            <person name="Reichwald K."/>
            <person name="Rhodes S."/>
            <person name="Ridler K.A."/>
            <person name="Schlessinger D."/>
            <person name="Schueler M.G."/>
            <person name="Sehra H.K."/>
            <person name="Shaw-Smith C."/>
            <person name="Shen H."/>
            <person name="Sheridan E.M."/>
            <person name="Shownkeen R."/>
            <person name="Skuce C.D."/>
            <person name="Smith M.L."/>
            <person name="Sotheran E.C."/>
            <person name="Steingruber H.E."/>
            <person name="Steward C.A."/>
            <person name="Storey R."/>
            <person name="Swann R.M."/>
            <person name="Swarbreck D."/>
            <person name="Tabor P.E."/>
            <person name="Taudien S."/>
            <person name="Taylor T."/>
            <person name="Teague B."/>
            <person name="Thomas K."/>
            <person name="Thorpe A."/>
            <person name="Timms K."/>
            <person name="Tracey A."/>
            <person name="Trevanion S."/>
            <person name="Tromans A.C."/>
            <person name="d'Urso M."/>
            <person name="Verduzco D."/>
            <person name="Villasana D."/>
            <person name="Waldron L."/>
            <person name="Wall M."/>
            <person name="Wang Q."/>
            <person name="Warren J."/>
            <person name="Warry G.L."/>
            <person name="Wei X."/>
            <person name="West A."/>
            <person name="Whitehead S.L."/>
            <person name="Whiteley M.N."/>
            <person name="Wilkinson J.E."/>
            <person name="Willey D.L."/>
            <person name="Williams G."/>
            <person name="Williams L."/>
            <person name="Williamson A."/>
            <person name="Williamson H."/>
            <person name="Wilming L."/>
            <person name="Woodmansey R.L."/>
            <person name="Wray P.W."/>
            <person name="Yen J."/>
            <person name="Zhang J."/>
            <person name="Zhou J."/>
            <person name="Zoghbi H."/>
            <person name="Zorilla S."/>
            <person name="Buck D."/>
            <person name="Reinhardt R."/>
            <person name="Poustka A."/>
            <person name="Rosenthal A."/>
            <person name="Lehrach H."/>
            <person name="Meindl A."/>
            <person name="Minx P.J."/>
            <person name="Hillier L.W."/>
            <person name="Willard H.F."/>
            <person name="Wilson R.K."/>
            <person name="Waterston R.H."/>
            <person name="Rice C.M."/>
            <person name="Vaudin M."/>
            <person name="Coulson A."/>
            <person name="Nelson D.L."/>
            <person name="Weinstock G."/>
            <person name="Sulston J.E."/>
            <person name="Durbin R.M."/>
            <person name="Hubbard T."/>
            <person name="Gibbs R.A."/>
            <person name="Beck S."/>
            <person name="Rogers J."/>
            <person name="Bentley D.R."/>
        </authorList>
    </citation>
    <scope>NUCLEOTIDE SEQUENCE [LARGE SCALE GENOMIC DNA]</scope>
</reference>
<reference key="3">
    <citation type="submission" date="2005-09" db="EMBL/GenBank/DDBJ databases">
        <authorList>
            <person name="Mural R.J."/>
            <person name="Istrail S."/>
            <person name="Sutton G.G."/>
            <person name="Florea L."/>
            <person name="Halpern A.L."/>
            <person name="Mobarry C.M."/>
            <person name="Lippert R."/>
            <person name="Walenz B."/>
            <person name="Shatkay H."/>
            <person name="Dew I."/>
            <person name="Miller J.R."/>
            <person name="Flanigan M.J."/>
            <person name="Edwards N.J."/>
            <person name="Bolanos R."/>
            <person name="Fasulo D."/>
            <person name="Halldorsson B.V."/>
            <person name="Hannenhalli S."/>
            <person name="Turner R."/>
            <person name="Yooseph S."/>
            <person name="Lu F."/>
            <person name="Nusskern D.R."/>
            <person name="Shue B.C."/>
            <person name="Zheng X.H."/>
            <person name="Zhong F."/>
            <person name="Delcher A.L."/>
            <person name="Huson D.H."/>
            <person name="Kravitz S.A."/>
            <person name="Mouchard L."/>
            <person name="Reinert K."/>
            <person name="Remington K.A."/>
            <person name="Clark A.G."/>
            <person name="Waterman M.S."/>
            <person name="Eichler E.E."/>
            <person name="Adams M.D."/>
            <person name="Hunkapiller M.W."/>
            <person name="Myers E.W."/>
            <person name="Venter J.C."/>
        </authorList>
    </citation>
    <scope>NUCLEOTIDE SEQUENCE [LARGE SCALE GENOMIC DNA]</scope>
</reference>
<reference key="4">
    <citation type="journal article" date="2004" name="Genome Res.">
        <title>The status, quality, and expansion of the NIH full-length cDNA project: the Mammalian Gene Collection (MGC).</title>
        <authorList>
            <consortium name="The MGC Project Team"/>
        </authorList>
    </citation>
    <scope>NUCLEOTIDE SEQUENCE [LARGE SCALE MRNA] (ISOFORM 1)</scope>
    <scope>VARIANTS ASN-432 AND ASP-606</scope>
    <source>
        <tissue>Brain</tissue>
        <tissue>Kidney</tissue>
        <tissue>Uterus</tissue>
    </source>
</reference>
<reference key="5">
    <citation type="journal article" date="2004" name="Nat. Genet.">
        <title>Complete sequencing and characterization of 21,243 full-length human cDNAs.</title>
        <authorList>
            <person name="Ota T."/>
            <person name="Suzuki Y."/>
            <person name="Nishikawa T."/>
            <person name="Otsuki T."/>
            <person name="Sugiyama T."/>
            <person name="Irie R."/>
            <person name="Wakamatsu A."/>
            <person name="Hayashi K."/>
            <person name="Sato H."/>
            <person name="Nagai K."/>
            <person name="Kimura K."/>
            <person name="Makita H."/>
            <person name="Sekine M."/>
            <person name="Obayashi M."/>
            <person name="Nishi T."/>
            <person name="Shibahara T."/>
            <person name="Tanaka T."/>
            <person name="Ishii S."/>
            <person name="Yamamoto J."/>
            <person name="Saito K."/>
            <person name="Kawai Y."/>
            <person name="Isono Y."/>
            <person name="Nakamura Y."/>
            <person name="Nagahari K."/>
            <person name="Murakami K."/>
            <person name="Yasuda T."/>
            <person name="Iwayanagi T."/>
            <person name="Wagatsuma M."/>
            <person name="Shiratori A."/>
            <person name="Sudo H."/>
            <person name="Hosoiri T."/>
            <person name="Kaku Y."/>
            <person name="Kodaira H."/>
            <person name="Kondo H."/>
            <person name="Sugawara M."/>
            <person name="Takahashi M."/>
            <person name="Kanda K."/>
            <person name="Yokoi T."/>
            <person name="Furuya T."/>
            <person name="Kikkawa E."/>
            <person name="Omura Y."/>
            <person name="Abe K."/>
            <person name="Kamihara K."/>
            <person name="Katsuta N."/>
            <person name="Sato K."/>
            <person name="Tanikawa M."/>
            <person name="Yamazaki M."/>
            <person name="Ninomiya K."/>
            <person name="Ishibashi T."/>
            <person name="Yamashita H."/>
            <person name="Murakawa K."/>
            <person name="Fujimori K."/>
            <person name="Tanai H."/>
            <person name="Kimata M."/>
            <person name="Watanabe M."/>
            <person name="Hiraoka S."/>
            <person name="Chiba Y."/>
            <person name="Ishida S."/>
            <person name="Ono Y."/>
            <person name="Takiguchi S."/>
            <person name="Watanabe S."/>
            <person name="Yosida M."/>
            <person name="Hotuta T."/>
            <person name="Kusano J."/>
            <person name="Kanehori K."/>
            <person name="Takahashi-Fujii A."/>
            <person name="Hara H."/>
            <person name="Tanase T.-O."/>
            <person name="Nomura Y."/>
            <person name="Togiya S."/>
            <person name="Komai F."/>
            <person name="Hara R."/>
            <person name="Takeuchi K."/>
            <person name="Arita M."/>
            <person name="Imose N."/>
            <person name="Musashino K."/>
            <person name="Yuuki H."/>
            <person name="Oshima A."/>
            <person name="Sasaki N."/>
            <person name="Aotsuka S."/>
            <person name="Yoshikawa Y."/>
            <person name="Matsunawa H."/>
            <person name="Ichihara T."/>
            <person name="Shiohata N."/>
            <person name="Sano S."/>
            <person name="Moriya S."/>
            <person name="Momiyama H."/>
            <person name="Satoh N."/>
            <person name="Takami S."/>
            <person name="Terashima Y."/>
            <person name="Suzuki O."/>
            <person name="Nakagawa S."/>
            <person name="Senoh A."/>
            <person name="Mizoguchi H."/>
            <person name="Goto Y."/>
            <person name="Shimizu F."/>
            <person name="Wakebe H."/>
            <person name="Hishigaki H."/>
            <person name="Watanabe T."/>
            <person name="Sugiyama A."/>
            <person name="Takemoto M."/>
            <person name="Kawakami B."/>
            <person name="Yamazaki M."/>
            <person name="Watanabe K."/>
            <person name="Kumagai A."/>
            <person name="Itakura S."/>
            <person name="Fukuzumi Y."/>
            <person name="Fujimori Y."/>
            <person name="Komiyama M."/>
            <person name="Tashiro H."/>
            <person name="Tanigami A."/>
            <person name="Fujiwara T."/>
            <person name="Ono T."/>
            <person name="Yamada K."/>
            <person name="Fujii Y."/>
            <person name="Ozaki K."/>
            <person name="Hirao M."/>
            <person name="Ohmori Y."/>
            <person name="Kawabata A."/>
            <person name="Hikiji T."/>
            <person name="Kobatake N."/>
            <person name="Inagaki H."/>
            <person name="Ikema Y."/>
            <person name="Okamoto S."/>
            <person name="Okitani R."/>
            <person name="Kawakami T."/>
            <person name="Noguchi S."/>
            <person name="Itoh T."/>
            <person name="Shigeta K."/>
            <person name="Senba T."/>
            <person name="Matsumura K."/>
            <person name="Nakajima Y."/>
            <person name="Mizuno T."/>
            <person name="Morinaga M."/>
            <person name="Sasaki M."/>
            <person name="Togashi T."/>
            <person name="Oyama M."/>
            <person name="Hata H."/>
            <person name="Watanabe M."/>
            <person name="Komatsu T."/>
            <person name="Mizushima-Sugano J."/>
            <person name="Satoh T."/>
            <person name="Shirai Y."/>
            <person name="Takahashi Y."/>
            <person name="Nakagawa K."/>
            <person name="Okumura K."/>
            <person name="Nagase T."/>
            <person name="Nomura N."/>
            <person name="Kikuchi H."/>
            <person name="Masuho Y."/>
            <person name="Yamashita R."/>
            <person name="Nakai K."/>
            <person name="Yada T."/>
            <person name="Nakamura Y."/>
            <person name="Ohara O."/>
            <person name="Isogai T."/>
            <person name="Sugano S."/>
        </authorList>
    </citation>
    <scope>NUCLEOTIDE SEQUENCE [LARGE SCALE MRNA] OF 282-643 (ISOFORM 1)</scope>
    <source>
        <tissue>Embryo</tissue>
    </source>
</reference>
<reference key="6">
    <citation type="journal article" date="2009" name="Sci. Signal.">
        <title>Quantitative phosphoproteomic analysis of T cell receptor signaling reveals system-wide modulation of protein-protein interactions.</title>
        <authorList>
            <person name="Mayya V."/>
            <person name="Lundgren D.H."/>
            <person name="Hwang S.-I."/>
            <person name="Rezaul K."/>
            <person name="Wu L."/>
            <person name="Eng J.K."/>
            <person name="Rodionov V."/>
            <person name="Han D.K."/>
        </authorList>
    </citation>
    <scope>PHOSPHORYLATION [LARGE SCALE ANALYSIS] AT THR-277</scope>
    <scope>IDENTIFICATION BY MASS SPECTROMETRY [LARGE SCALE ANALYSIS]</scope>
    <source>
        <tissue>Leukemic T-cell</tissue>
    </source>
</reference>
<reference key="7">
    <citation type="journal article" date="2011" name="Sci. Signal.">
        <title>System-wide temporal characterization of the proteome and phosphoproteome of human embryonic stem cell differentiation.</title>
        <authorList>
            <person name="Rigbolt K.T."/>
            <person name="Prokhorova T.A."/>
            <person name="Akimov V."/>
            <person name="Henningsen J."/>
            <person name="Johansen P.T."/>
            <person name="Kratchmarova I."/>
            <person name="Kassem M."/>
            <person name="Mann M."/>
            <person name="Olsen J.V."/>
            <person name="Blagoev B."/>
        </authorList>
    </citation>
    <scope>PHOSPHORYLATION [LARGE SCALE ANALYSIS] AT THR-277</scope>
    <scope>IDENTIFICATION BY MASS SPECTROMETRY [LARGE SCALE ANALYSIS]</scope>
</reference>
<reference key="8">
    <citation type="journal article" date="2013" name="J. Proteome Res.">
        <title>Toward a comprehensive characterization of a human cancer cell phosphoproteome.</title>
        <authorList>
            <person name="Zhou H."/>
            <person name="Di Palma S."/>
            <person name="Preisinger C."/>
            <person name="Peng M."/>
            <person name="Polat A.N."/>
            <person name="Heck A.J."/>
            <person name="Mohammed S."/>
        </authorList>
    </citation>
    <scope>PHOSPHORYLATION [LARGE SCALE ANALYSIS] AT SER-265 AND THR-277</scope>
    <scope>IDENTIFICATION BY MASS SPECTROMETRY [LARGE SCALE ANALYSIS]</scope>
    <source>
        <tissue>Cervix carcinoma</tissue>
        <tissue>Erythroleukemia</tissue>
    </source>
</reference>
<comment type="function">
    <text evidence="1 5">Has E2-dependent E3 ubiquitin-protein ligase activity. Ubiquitinates MAGED1 antigen leading to its subsequent degradation by proteasome (By similarity). May be involved in protein sorting.</text>
</comment>
<comment type="catalytic activity">
    <reaction>
        <text>S-ubiquitinyl-[E2 ubiquitin-conjugating enzyme]-L-cysteine + [acceptor protein]-L-lysine = [E2 ubiquitin-conjugating enzyme]-L-cysteine + N(6)-ubiquitinyl-[acceptor protein]-L-lysine.</text>
        <dbReference type="EC" id="2.3.2.27"/>
    </reaction>
</comment>
<comment type="subunit">
    <text evidence="5">Binds ubiquitin-conjugating enzymes (E2s). In vitro, interacts with the ubiquitin-conjugating enzyme, UBE2D2.</text>
</comment>
<comment type="interaction">
    <interactant intactId="EBI-714606">
        <id>Q8NG27</id>
    </interactant>
    <interactant intactId="EBI-716006">
        <id>Q9Y5V3</id>
        <label>MAGED1</label>
    </interactant>
    <organismsDiffer>false</organismsDiffer>
    <experiments>7</experiments>
</comment>
<comment type="interaction">
    <interactant intactId="EBI-714606">
        <id>Q8NG27</id>
    </interactant>
    <interactant intactId="EBI-2557356">
        <id>Q96MG7</id>
        <label>NSMCE3</label>
    </interactant>
    <organismsDiffer>false</organismsDiffer>
    <experiments>4</experiments>
</comment>
<comment type="alternative products">
    <event type="alternative splicing"/>
    <isoform>
        <id>Q8NG27-1</id>
        <name>1</name>
        <sequence type="displayed"/>
    </isoform>
    <isoform>
        <id>Q8NG27-2</id>
        <name>2</name>
        <name>PJA1-beta</name>
        <name>Praja1-beta</name>
        <sequence type="described" ref="VSP_007518"/>
    </isoform>
    <isoform>
        <id>Q8NG27-3</id>
        <name>3</name>
        <sequence type="described" ref="VSP_046995"/>
    </isoform>
</comment>
<comment type="tissue specificity">
    <text evidence="5">Expressed in various regions of the brain including the cerebellum, cerebral cortex, medulla, occipital pole, frontal lobe, temporal lobe and putamen. Highest levels in the cerebral cortex.</text>
</comment>
<comment type="domain">
    <text evidence="1">The RING-type zinc finger domain interacts with an ubiquitin-conjugating enzyme (E2) and facilitates ubiquitination.</text>
</comment>
<comment type="PTM">
    <text>Substrate for E2-dependent ubiquitination.</text>
</comment>
<comment type="miscellaneous">
    <molecule>Isoform 2</molecule>
    <text evidence="8">PubMed:12036302 reported that isoform 2 arises by alternative initiation.</text>
</comment>
<comment type="sequence caution" evidence="8">
    <conflict type="erroneous initiation">
        <sequence resource="EMBL-CDS" id="BAB13928"/>
    </conflict>
    <text>Truncated N-terminus.</text>
</comment>
<keyword id="KW-0002">3D-structure</keyword>
<keyword id="KW-0025">Alternative splicing</keyword>
<keyword id="KW-0479">Metal-binding</keyword>
<keyword id="KW-0597">Phosphoprotein</keyword>
<keyword id="KW-1267">Proteomics identification</keyword>
<keyword id="KW-1185">Reference proteome</keyword>
<keyword id="KW-0808">Transferase</keyword>
<keyword id="KW-0832">Ubl conjugation</keyword>
<keyword id="KW-0833">Ubl conjugation pathway</keyword>
<keyword id="KW-0862">Zinc</keyword>
<keyword id="KW-0863">Zinc-finger</keyword>
<feature type="chain" id="PRO_0000055999" description="E3 ubiquitin-protein ligase Praja-1">
    <location>
        <begin position="1"/>
        <end position="643"/>
    </location>
</feature>
<feature type="zinc finger region" description="RING-type" evidence="3">
    <location>
        <begin position="595"/>
        <end position="636"/>
    </location>
</feature>
<feature type="region of interest" description="Disordered" evidence="4">
    <location>
        <begin position="1"/>
        <end position="363"/>
    </location>
</feature>
<feature type="region of interest" description="Disordered" evidence="4">
    <location>
        <begin position="380"/>
        <end position="454"/>
    </location>
</feature>
<feature type="compositionally biased region" description="Basic and acidic residues" evidence="4">
    <location>
        <begin position="95"/>
        <end position="105"/>
    </location>
</feature>
<feature type="compositionally biased region" description="Basic and acidic residues" evidence="4">
    <location>
        <begin position="145"/>
        <end position="158"/>
    </location>
</feature>
<feature type="compositionally biased region" description="Basic and acidic residues" evidence="4">
    <location>
        <begin position="173"/>
        <end position="183"/>
    </location>
</feature>
<feature type="compositionally biased region" description="Low complexity" evidence="4">
    <location>
        <begin position="200"/>
        <end position="209"/>
    </location>
</feature>
<feature type="compositionally biased region" description="Basic and acidic residues" evidence="4">
    <location>
        <begin position="213"/>
        <end position="227"/>
    </location>
</feature>
<feature type="compositionally biased region" description="Basic and acidic residues" evidence="4">
    <location>
        <begin position="289"/>
        <end position="310"/>
    </location>
</feature>
<feature type="compositionally biased region" description="Basic and acidic residues" evidence="4">
    <location>
        <begin position="320"/>
        <end position="362"/>
    </location>
</feature>
<feature type="compositionally biased region" description="Low complexity" evidence="4">
    <location>
        <begin position="410"/>
        <end position="439"/>
    </location>
</feature>
<feature type="modified residue" description="Phosphoserine" evidence="11">
    <location>
        <position position="265"/>
    </location>
</feature>
<feature type="modified residue" description="Phosphothreonine" evidence="9 10 11">
    <location>
        <position position="277"/>
    </location>
</feature>
<feature type="modified residue" description="Phosphoserine" evidence="2">
    <location>
        <position position="365"/>
    </location>
</feature>
<feature type="modified residue" description="Phosphoserine" evidence="2">
    <location>
        <position position="367"/>
    </location>
</feature>
<feature type="splice variant" id="VSP_046995" description="In isoform 3." evidence="8">
    <location>
        <begin position="1"/>
        <end position="55"/>
    </location>
</feature>
<feature type="splice variant" id="VSP_007518" description="In isoform 2." evidence="7">
    <location>
        <begin position="98"/>
        <end position="285"/>
    </location>
</feature>
<feature type="sequence variant" id="VAR_052088" description="In dbSNP:rs5937160." evidence="6">
    <original>S</original>
    <variation>N</variation>
    <location>
        <position position="432"/>
    </location>
</feature>
<feature type="sequence variant" id="VAR_052089" description="In dbSNP:rs11539157." evidence="6">
    <original>E</original>
    <variation>D</variation>
    <location>
        <position position="606"/>
    </location>
</feature>
<feature type="helix" evidence="12">
    <location>
        <begin position="571"/>
        <end position="575"/>
    </location>
</feature>
<feature type="strand" evidence="12">
    <location>
        <begin position="579"/>
        <end position="581"/>
    </location>
</feature>
<feature type="strand" evidence="12">
    <location>
        <begin position="587"/>
        <end position="591"/>
    </location>
</feature>
<feature type="turn" evidence="12">
    <location>
        <begin position="596"/>
        <end position="598"/>
    </location>
</feature>
<feature type="strand" evidence="12">
    <location>
        <begin position="607"/>
        <end position="611"/>
    </location>
</feature>
<feature type="turn" evidence="12">
    <location>
        <begin position="612"/>
        <end position="614"/>
    </location>
</feature>
<feature type="strand" evidence="12">
    <location>
        <begin position="615"/>
        <end position="618"/>
    </location>
</feature>
<feature type="helix" evidence="12">
    <location>
        <begin position="619"/>
        <end position="626"/>
    </location>
</feature>
<feature type="turn" evidence="12">
    <location>
        <begin position="633"/>
        <end position="635"/>
    </location>
</feature>
<feature type="strand" evidence="12">
    <location>
        <begin position="638"/>
        <end position="640"/>
    </location>
</feature>
<organism>
    <name type="scientific">Homo sapiens</name>
    <name type="common">Human</name>
    <dbReference type="NCBI Taxonomy" id="9606"/>
    <lineage>
        <taxon>Eukaryota</taxon>
        <taxon>Metazoa</taxon>
        <taxon>Chordata</taxon>
        <taxon>Craniata</taxon>
        <taxon>Vertebrata</taxon>
        <taxon>Euteleostomi</taxon>
        <taxon>Mammalia</taxon>
        <taxon>Eutheria</taxon>
        <taxon>Euarchontoglires</taxon>
        <taxon>Primates</taxon>
        <taxon>Haplorrhini</taxon>
        <taxon>Catarrhini</taxon>
        <taxon>Hominidae</taxon>
        <taxon>Homo</taxon>
    </lineage>
</organism>
<proteinExistence type="evidence at protein level"/>
<sequence>MGQESSKPVWPNPTGGYQSNTGRRYGRRHAYVSFRPPTSQRERIASQRKTNSEVPMHRSAPSQTTKRSRSPFSTTRRSWDDSESSGTNLNIDNEDYSRYPPREYRASGSRRGMAYGHIDSYGADDSEEEGAGPVERPPVRGKTGKFKDDKLYDPEKGARSLAGPPPHFSSFSRDVREERDKLDPVPAARCSASRADFLPQSSVASQSSSEGKLATKGDSSERERREQNLPARPSRAPVSICGGGENTSKSAEEPVVRPKIRNLASPNCVKPKIFFDTDDDDDMPHSTSRWRDTANDNEGHSDGLARRGRGESSSGYPEPKYPEDKREARSDQVKPEKVPRRRRTMADPDFWTHSDDYYKYCDEDSDSDKEWIAALRRKYRSREQTLSSSGESWETLPGKEEREPPQAKVSASTGTSPGPGASASAGAGAGASAGSNGSNYLEEVREPSLQEEQASLEEGEIPWLQYHENDSSSEGDNDSGHELMQPGVFMLDGNNNLEDDSSVSEDLEVDWSLFDGFADGLGVAEAISYVDPQFLTYMALEERLAQAMETALAHLESLAVDVEVANPPASKESIDALPEILVTEDHGAVGQEMCCPICCSEYVKGEVATELPCHHYFHKPCVSIWLQKSGTCPVCRCMFPPPL</sequence>
<evidence type="ECO:0000250" key="1"/>
<evidence type="ECO:0000250" key="2">
    <source>
        <dbReference type="UniProtKB" id="O55176"/>
    </source>
</evidence>
<evidence type="ECO:0000255" key="3">
    <source>
        <dbReference type="PROSITE-ProRule" id="PRU00175"/>
    </source>
</evidence>
<evidence type="ECO:0000256" key="4">
    <source>
        <dbReference type="SAM" id="MobiDB-lite"/>
    </source>
</evidence>
<evidence type="ECO:0000269" key="5">
    <source>
    </source>
</evidence>
<evidence type="ECO:0000269" key="6">
    <source>
    </source>
</evidence>
<evidence type="ECO:0000303" key="7">
    <source>
    </source>
</evidence>
<evidence type="ECO:0000305" key="8"/>
<evidence type="ECO:0007744" key="9">
    <source>
    </source>
</evidence>
<evidence type="ECO:0007744" key="10">
    <source>
    </source>
</evidence>
<evidence type="ECO:0007744" key="11">
    <source>
    </source>
</evidence>
<evidence type="ECO:0007829" key="12">
    <source>
        <dbReference type="PDB" id="2L0B"/>
    </source>
</evidence>
<dbReference type="EC" id="2.3.2.27"/>
<dbReference type="EMBL" id="AF262024">
    <property type="protein sequence ID" value="AAM53039.1"/>
    <property type="molecule type" value="mRNA"/>
</dbReference>
<dbReference type="EMBL" id="AF264620">
    <property type="protein sequence ID" value="AAM53040.1"/>
    <property type="molecule type" value="mRNA"/>
</dbReference>
<dbReference type="EMBL" id="AL157699">
    <property type="status" value="NOT_ANNOTATED_CDS"/>
    <property type="molecule type" value="Genomic_DNA"/>
</dbReference>
<dbReference type="EMBL" id="CH471132">
    <property type="protein sequence ID" value="EAX05367.1"/>
    <property type="molecule type" value="Genomic_DNA"/>
</dbReference>
<dbReference type="EMBL" id="BC048323">
    <property type="protein sequence ID" value="AAH48323.1"/>
    <property type="molecule type" value="mRNA"/>
</dbReference>
<dbReference type="EMBL" id="BC075803">
    <property type="protein sequence ID" value="AAH75803.1"/>
    <property type="molecule type" value="mRNA"/>
</dbReference>
<dbReference type="EMBL" id="BC105051">
    <property type="protein sequence ID" value="AAI05052.1"/>
    <property type="molecule type" value="mRNA"/>
</dbReference>
<dbReference type="EMBL" id="BC105053">
    <property type="protein sequence ID" value="AAI05054.1"/>
    <property type="molecule type" value="mRNA"/>
</dbReference>
<dbReference type="EMBL" id="AK021892">
    <property type="protein sequence ID" value="BAB13928.1"/>
    <property type="status" value="ALT_INIT"/>
    <property type="molecule type" value="mRNA"/>
</dbReference>
<dbReference type="CCDS" id="CCDS14392.1">
    <molecule id="Q8NG27-2"/>
</dbReference>
<dbReference type="CCDS" id="CCDS14393.1">
    <molecule id="Q8NG27-1"/>
</dbReference>
<dbReference type="CCDS" id="CCDS35316.1">
    <molecule id="Q8NG27-3"/>
</dbReference>
<dbReference type="RefSeq" id="NP_001027568.1">
    <molecule id="Q8NG27-3"/>
    <property type="nucleotide sequence ID" value="NM_001032396.4"/>
</dbReference>
<dbReference type="RefSeq" id="NP_001369704.1">
    <molecule id="Q8NG27-1"/>
    <property type="nucleotide sequence ID" value="NM_001382775.1"/>
</dbReference>
<dbReference type="RefSeq" id="NP_001369705.1">
    <molecule id="Q8NG27-3"/>
    <property type="nucleotide sequence ID" value="NM_001382776.1"/>
</dbReference>
<dbReference type="RefSeq" id="NP_071763.2">
    <molecule id="Q8NG27-2"/>
    <property type="nucleotide sequence ID" value="NM_022368.4"/>
</dbReference>
<dbReference type="RefSeq" id="NP_660095.1">
    <molecule id="Q8NG27-1"/>
    <property type="nucleotide sequence ID" value="NM_145119.4"/>
</dbReference>
<dbReference type="RefSeq" id="XP_005262349.1">
    <property type="nucleotide sequence ID" value="XM_005262292.1"/>
</dbReference>
<dbReference type="RefSeq" id="XP_011529313.1">
    <property type="nucleotide sequence ID" value="XM_011531011.2"/>
</dbReference>
<dbReference type="PDB" id="2L0B">
    <property type="method" value="NMR"/>
    <property type="chains" value="A=564-643"/>
</dbReference>
<dbReference type="PDBsum" id="2L0B"/>
<dbReference type="BMRB" id="Q8NG27"/>
<dbReference type="SMR" id="Q8NG27"/>
<dbReference type="BioGRID" id="122109">
    <property type="interactions" value="128"/>
</dbReference>
<dbReference type="CORUM" id="Q8NG27"/>
<dbReference type="FunCoup" id="Q8NG27">
    <property type="interactions" value="300"/>
</dbReference>
<dbReference type="IntAct" id="Q8NG27">
    <property type="interactions" value="44"/>
</dbReference>
<dbReference type="STRING" id="9606.ENSP00000355014"/>
<dbReference type="GlyGen" id="Q8NG27">
    <property type="glycosylation" value="2 sites, 1 O-linked glycan (2 sites)"/>
</dbReference>
<dbReference type="iPTMnet" id="Q8NG27"/>
<dbReference type="PhosphoSitePlus" id="Q8NG27"/>
<dbReference type="BioMuta" id="PJA1"/>
<dbReference type="DMDM" id="31076980"/>
<dbReference type="jPOST" id="Q8NG27"/>
<dbReference type="MassIVE" id="Q8NG27"/>
<dbReference type="PaxDb" id="9606-ENSP00000355014"/>
<dbReference type="PeptideAtlas" id="Q8NG27"/>
<dbReference type="ProteomicsDB" id="246"/>
<dbReference type="ProteomicsDB" id="73411">
    <molecule id="Q8NG27-1"/>
</dbReference>
<dbReference type="ProteomicsDB" id="73412">
    <molecule id="Q8NG27-2"/>
</dbReference>
<dbReference type="Pumba" id="Q8NG27"/>
<dbReference type="Antibodypedia" id="402">
    <property type="antibodies" value="157 antibodies from 31 providers"/>
</dbReference>
<dbReference type="DNASU" id="64219"/>
<dbReference type="Ensembl" id="ENST00000361478.1">
    <molecule id="Q8NG27-1"/>
    <property type="protein sequence ID" value="ENSP00000355014.1"/>
    <property type="gene ID" value="ENSG00000181191.12"/>
</dbReference>
<dbReference type="Ensembl" id="ENST00000374571.5">
    <molecule id="Q8NG27-3"/>
    <property type="protein sequence ID" value="ENSP00000363699.3"/>
    <property type="gene ID" value="ENSG00000181191.12"/>
</dbReference>
<dbReference type="Ensembl" id="ENST00000374583.1">
    <molecule id="Q8NG27-1"/>
    <property type="protein sequence ID" value="ENSP00000363711.1"/>
    <property type="gene ID" value="ENSG00000181191.12"/>
</dbReference>
<dbReference type="Ensembl" id="ENST00000374584.3">
    <molecule id="Q8NG27-2"/>
    <property type="protein sequence ID" value="ENSP00000363712.3"/>
    <property type="gene ID" value="ENSG00000181191.12"/>
</dbReference>
<dbReference type="GeneID" id="64219"/>
<dbReference type="KEGG" id="hsa:64219"/>
<dbReference type="MANE-Select" id="ENST00000374571.5">
    <molecule id="Q8NG27-3"/>
    <property type="protein sequence ID" value="ENSP00000363699.3"/>
    <property type="RefSeq nucleotide sequence ID" value="NM_001032396.4"/>
    <property type="RefSeq protein sequence ID" value="NP_001027568.1"/>
</dbReference>
<dbReference type="UCSC" id="uc004dxg.4">
    <molecule id="Q8NG27-1"/>
    <property type="organism name" value="human"/>
</dbReference>
<dbReference type="AGR" id="HGNC:16648"/>
<dbReference type="CTD" id="64219"/>
<dbReference type="DisGeNET" id="64219"/>
<dbReference type="GeneCards" id="PJA1"/>
<dbReference type="HGNC" id="HGNC:16648">
    <property type="gene designation" value="PJA1"/>
</dbReference>
<dbReference type="HPA" id="ENSG00000181191">
    <property type="expression patterns" value="Tissue enhanced (epididymis)"/>
</dbReference>
<dbReference type="MIM" id="300420">
    <property type="type" value="gene"/>
</dbReference>
<dbReference type="neXtProt" id="NX_Q8NG27"/>
<dbReference type="OpenTargets" id="ENSG00000181191"/>
<dbReference type="PharmGKB" id="PA33342"/>
<dbReference type="VEuPathDB" id="HostDB:ENSG00000181191"/>
<dbReference type="eggNOG" id="KOG0800">
    <property type="taxonomic scope" value="Eukaryota"/>
</dbReference>
<dbReference type="GeneTree" id="ENSGT00940000154585"/>
<dbReference type="HOGENOM" id="CLU_026830_1_0_1"/>
<dbReference type="InParanoid" id="Q8NG27"/>
<dbReference type="OMA" id="ICCSEYA"/>
<dbReference type="OrthoDB" id="21204at2759"/>
<dbReference type="PAN-GO" id="Q8NG27">
    <property type="GO annotations" value="0 GO annotations based on evolutionary models"/>
</dbReference>
<dbReference type="PhylomeDB" id="Q8NG27"/>
<dbReference type="TreeFam" id="TF330711"/>
<dbReference type="PathwayCommons" id="Q8NG27"/>
<dbReference type="Reactome" id="R-HSA-983168">
    <property type="pathway name" value="Antigen processing: Ubiquitination &amp; Proteasome degradation"/>
</dbReference>
<dbReference type="SignaLink" id="Q8NG27"/>
<dbReference type="SIGNOR" id="Q8NG27"/>
<dbReference type="BioGRID-ORCS" id="64219">
    <property type="hits" value="11 hits in 815 CRISPR screens"/>
</dbReference>
<dbReference type="CD-CODE" id="B5B9A610">
    <property type="entry name" value="PML body"/>
</dbReference>
<dbReference type="EvolutionaryTrace" id="Q8NG27"/>
<dbReference type="GeneWiki" id="PJA1"/>
<dbReference type="GenomeRNAi" id="64219"/>
<dbReference type="Pharos" id="Q8NG27">
    <property type="development level" value="Tbio"/>
</dbReference>
<dbReference type="PRO" id="PR:Q8NG27"/>
<dbReference type="Proteomes" id="UP000005640">
    <property type="component" value="Chromosome X"/>
</dbReference>
<dbReference type="RNAct" id="Q8NG27">
    <property type="molecule type" value="protein"/>
</dbReference>
<dbReference type="Bgee" id="ENSG00000181191">
    <property type="expression patterns" value="Expressed in cortical plate and 193 other cell types or tissues"/>
</dbReference>
<dbReference type="ExpressionAtlas" id="Q8NG27">
    <property type="expression patterns" value="baseline and differential"/>
</dbReference>
<dbReference type="GO" id="GO:0005737">
    <property type="term" value="C:cytoplasm"/>
    <property type="evidence" value="ECO:0000318"/>
    <property type="project" value="GO_Central"/>
</dbReference>
<dbReference type="GO" id="GO:0061630">
    <property type="term" value="F:ubiquitin protein ligase activity"/>
    <property type="evidence" value="ECO:0000318"/>
    <property type="project" value="GO_Central"/>
</dbReference>
<dbReference type="GO" id="GO:0008270">
    <property type="term" value="F:zinc ion binding"/>
    <property type="evidence" value="ECO:0007669"/>
    <property type="project" value="UniProtKB-KW"/>
</dbReference>
<dbReference type="GO" id="GO:0030163">
    <property type="term" value="P:protein catabolic process"/>
    <property type="evidence" value="ECO:0007669"/>
    <property type="project" value="Ensembl"/>
</dbReference>
<dbReference type="GO" id="GO:0016567">
    <property type="term" value="P:protein ubiquitination"/>
    <property type="evidence" value="ECO:0000318"/>
    <property type="project" value="GO_Central"/>
</dbReference>
<dbReference type="CDD" id="cd16465">
    <property type="entry name" value="RING-H2_PJA1_2"/>
    <property type="match status" value="1"/>
</dbReference>
<dbReference type="FunFam" id="3.30.40.10:FF:000152">
    <property type="entry name" value="E3 ubiquitin-protein ligase Praja-1 isoform X1"/>
    <property type="match status" value="1"/>
</dbReference>
<dbReference type="Gene3D" id="3.30.40.10">
    <property type="entry name" value="Zinc/RING finger domain, C3HC4 (zinc finger)"/>
    <property type="match status" value="1"/>
</dbReference>
<dbReference type="InterPro" id="IPR001841">
    <property type="entry name" value="Znf_RING"/>
</dbReference>
<dbReference type="InterPro" id="IPR013083">
    <property type="entry name" value="Znf_RING/FYVE/PHD"/>
</dbReference>
<dbReference type="PANTHER" id="PTHR15710">
    <property type="entry name" value="E3 UBIQUITIN-PROTEIN LIGASE PRAJA"/>
    <property type="match status" value="1"/>
</dbReference>
<dbReference type="PANTHER" id="PTHR15710:SF2">
    <property type="entry name" value="E3 UBIQUITIN-PROTEIN LIGASE PRAJA-1"/>
    <property type="match status" value="1"/>
</dbReference>
<dbReference type="Pfam" id="PF13639">
    <property type="entry name" value="zf-RING_2"/>
    <property type="match status" value="1"/>
</dbReference>
<dbReference type="SMART" id="SM00184">
    <property type="entry name" value="RING"/>
    <property type="match status" value="1"/>
</dbReference>
<dbReference type="SUPFAM" id="SSF57850">
    <property type="entry name" value="RING/U-box"/>
    <property type="match status" value="1"/>
</dbReference>
<dbReference type="PROSITE" id="PS50089">
    <property type="entry name" value="ZF_RING_2"/>
    <property type="match status" value="1"/>
</dbReference>
<gene>
    <name type="primary">PJA1</name>
    <name type="synonym">RNF70</name>
</gene>